<dbReference type="EC" id="6.1.1.7" evidence="1"/>
<dbReference type="EMBL" id="CP000681">
    <property type="protein sequence ID" value="ABP76464.1"/>
    <property type="status" value="ALT_INIT"/>
    <property type="molecule type" value="Genomic_DNA"/>
</dbReference>
<dbReference type="SMR" id="A4Y931"/>
<dbReference type="STRING" id="319224.Sputcn32_2745"/>
<dbReference type="KEGG" id="spc:Sputcn32_2745"/>
<dbReference type="eggNOG" id="COG0013">
    <property type="taxonomic scope" value="Bacteria"/>
</dbReference>
<dbReference type="HOGENOM" id="CLU_004485_1_1_6"/>
<dbReference type="GO" id="GO:0005829">
    <property type="term" value="C:cytosol"/>
    <property type="evidence" value="ECO:0007669"/>
    <property type="project" value="TreeGrafter"/>
</dbReference>
<dbReference type="GO" id="GO:0004813">
    <property type="term" value="F:alanine-tRNA ligase activity"/>
    <property type="evidence" value="ECO:0007669"/>
    <property type="project" value="UniProtKB-UniRule"/>
</dbReference>
<dbReference type="GO" id="GO:0002161">
    <property type="term" value="F:aminoacyl-tRNA deacylase activity"/>
    <property type="evidence" value="ECO:0007669"/>
    <property type="project" value="TreeGrafter"/>
</dbReference>
<dbReference type="GO" id="GO:0005524">
    <property type="term" value="F:ATP binding"/>
    <property type="evidence" value="ECO:0007669"/>
    <property type="project" value="UniProtKB-UniRule"/>
</dbReference>
<dbReference type="GO" id="GO:0000049">
    <property type="term" value="F:tRNA binding"/>
    <property type="evidence" value="ECO:0007669"/>
    <property type="project" value="UniProtKB-KW"/>
</dbReference>
<dbReference type="GO" id="GO:0008270">
    <property type="term" value="F:zinc ion binding"/>
    <property type="evidence" value="ECO:0007669"/>
    <property type="project" value="UniProtKB-UniRule"/>
</dbReference>
<dbReference type="GO" id="GO:0006419">
    <property type="term" value="P:alanyl-tRNA aminoacylation"/>
    <property type="evidence" value="ECO:0007669"/>
    <property type="project" value="UniProtKB-UniRule"/>
</dbReference>
<dbReference type="GO" id="GO:0045892">
    <property type="term" value="P:negative regulation of DNA-templated transcription"/>
    <property type="evidence" value="ECO:0007669"/>
    <property type="project" value="TreeGrafter"/>
</dbReference>
<dbReference type="CDD" id="cd00673">
    <property type="entry name" value="AlaRS_core"/>
    <property type="match status" value="1"/>
</dbReference>
<dbReference type="FunFam" id="2.40.30.130:FF:000001">
    <property type="entry name" value="Alanine--tRNA ligase"/>
    <property type="match status" value="1"/>
</dbReference>
<dbReference type="FunFam" id="3.10.310.40:FF:000001">
    <property type="entry name" value="Alanine--tRNA ligase"/>
    <property type="match status" value="1"/>
</dbReference>
<dbReference type="FunFam" id="3.30.54.20:FF:000001">
    <property type="entry name" value="Alanine--tRNA ligase"/>
    <property type="match status" value="1"/>
</dbReference>
<dbReference type="FunFam" id="3.30.930.10:FF:000004">
    <property type="entry name" value="Alanine--tRNA ligase"/>
    <property type="match status" value="1"/>
</dbReference>
<dbReference type="FunFam" id="3.30.980.10:FF:000004">
    <property type="entry name" value="Alanine--tRNA ligase, cytoplasmic"/>
    <property type="match status" value="1"/>
</dbReference>
<dbReference type="Gene3D" id="2.40.30.130">
    <property type="match status" value="1"/>
</dbReference>
<dbReference type="Gene3D" id="3.10.310.40">
    <property type="match status" value="1"/>
</dbReference>
<dbReference type="Gene3D" id="3.30.54.20">
    <property type="match status" value="1"/>
</dbReference>
<dbReference type="Gene3D" id="6.10.250.550">
    <property type="match status" value="1"/>
</dbReference>
<dbReference type="Gene3D" id="3.30.930.10">
    <property type="entry name" value="Bira Bifunctional Protein, Domain 2"/>
    <property type="match status" value="1"/>
</dbReference>
<dbReference type="Gene3D" id="3.30.980.10">
    <property type="entry name" value="Threonyl-trna Synthetase, Chain A, domain 2"/>
    <property type="match status" value="1"/>
</dbReference>
<dbReference type="HAMAP" id="MF_00036_B">
    <property type="entry name" value="Ala_tRNA_synth_B"/>
    <property type="match status" value="1"/>
</dbReference>
<dbReference type="InterPro" id="IPR045864">
    <property type="entry name" value="aa-tRNA-synth_II/BPL/LPL"/>
</dbReference>
<dbReference type="InterPro" id="IPR002318">
    <property type="entry name" value="Ala-tRNA-lgiase_IIc"/>
</dbReference>
<dbReference type="InterPro" id="IPR018162">
    <property type="entry name" value="Ala-tRNA-ligase_IIc_anticod-bd"/>
</dbReference>
<dbReference type="InterPro" id="IPR018165">
    <property type="entry name" value="Ala-tRNA-synth_IIc_core"/>
</dbReference>
<dbReference type="InterPro" id="IPR018164">
    <property type="entry name" value="Ala-tRNA-synth_IIc_N"/>
</dbReference>
<dbReference type="InterPro" id="IPR050058">
    <property type="entry name" value="Ala-tRNA_ligase"/>
</dbReference>
<dbReference type="InterPro" id="IPR023033">
    <property type="entry name" value="Ala_tRNA_ligase_euk/bac"/>
</dbReference>
<dbReference type="InterPro" id="IPR003156">
    <property type="entry name" value="DHHA1_dom"/>
</dbReference>
<dbReference type="InterPro" id="IPR018163">
    <property type="entry name" value="Thr/Ala-tRNA-synth_IIc_edit"/>
</dbReference>
<dbReference type="InterPro" id="IPR009000">
    <property type="entry name" value="Transl_B-barrel_sf"/>
</dbReference>
<dbReference type="InterPro" id="IPR012947">
    <property type="entry name" value="tRNA_SAD"/>
</dbReference>
<dbReference type="NCBIfam" id="TIGR00344">
    <property type="entry name" value="alaS"/>
    <property type="match status" value="1"/>
</dbReference>
<dbReference type="PANTHER" id="PTHR11777:SF9">
    <property type="entry name" value="ALANINE--TRNA LIGASE, CYTOPLASMIC"/>
    <property type="match status" value="1"/>
</dbReference>
<dbReference type="PANTHER" id="PTHR11777">
    <property type="entry name" value="ALANYL-TRNA SYNTHETASE"/>
    <property type="match status" value="1"/>
</dbReference>
<dbReference type="Pfam" id="PF02272">
    <property type="entry name" value="DHHA1"/>
    <property type="match status" value="1"/>
</dbReference>
<dbReference type="Pfam" id="PF01411">
    <property type="entry name" value="tRNA-synt_2c"/>
    <property type="match status" value="1"/>
</dbReference>
<dbReference type="Pfam" id="PF07973">
    <property type="entry name" value="tRNA_SAD"/>
    <property type="match status" value="1"/>
</dbReference>
<dbReference type="PRINTS" id="PR00980">
    <property type="entry name" value="TRNASYNTHALA"/>
</dbReference>
<dbReference type="SMART" id="SM00863">
    <property type="entry name" value="tRNA_SAD"/>
    <property type="match status" value="1"/>
</dbReference>
<dbReference type="SUPFAM" id="SSF55681">
    <property type="entry name" value="Class II aaRS and biotin synthetases"/>
    <property type="match status" value="1"/>
</dbReference>
<dbReference type="SUPFAM" id="SSF101353">
    <property type="entry name" value="Putative anticodon-binding domain of alanyl-tRNA synthetase (AlaRS)"/>
    <property type="match status" value="1"/>
</dbReference>
<dbReference type="SUPFAM" id="SSF55186">
    <property type="entry name" value="ThrRS/AlaRS common domain"/>
    <property type="match status" value="1"/>
</dbReference>
<dbReference type="SUPFAM" id="SSF50447">
    <property type="entry name" value="Translation proteins"/>
    <property type="match status" value="1"/>
</dbReference>
<dbReference type="PROSITE" id="PS50860">
    <property type="entry name" value="AA_TRNA_LIGASE_II_ALA"/>
    <property type="match status" value="1"/>
</dbReference>
<gene>
    <name evidence="1" type="primary">alaS</name>
    <name type="ordered locus">Sputcn32_2745</name>
</gene>
<name>SYA_SHEPC</name>
<protein>
    <recommendedName>
        <fullName evidence="1">Alanine--tRNA ligase</fullName>
        <ecNumber evidence="1">6.1.1.7</ecNumber>
    </recommendedName>
    <alternativeName>
        <fullName evidence="1">Alanyl-tRNA synthetase</fullName>
        <shortName evidence="1">AlaRS</shortName>
    </alternativeName>
</protein>
<sequence>MYQTTAELRSAFLEFFRSHGHQVVDSSSLVPGNDPTLLFTNAGMNQFKDVFLGMDKRNYTRATTAQRCVRAGGKHNDLDNVGYTARHHTFFEMLGNFSFGDYFKEEAICFGWSFLTETLKLPKERLCVTIYQTDDEAFEIWNKKIGVAAENIIRIGDNKGAPYASDNFWQMGDTGPCGPCTEIFYDHGDHIWGGRPGSPEEDGDRFIEIWNIVFMQYNRHISGEMLPLPKPSVDTGMGIERIAAIMQGVHSNYEIDIFRALIAKAAEIIGVTDLSNKSLRVIADHIRSCAFLVADGVMPSNEGRGYVLRRIIRRAVRHGNKLGATEAFFYKLVPTLIDVMGDAAKGLAETQVIVEKALKAEEEQFARTLERGLGILDAALSELTGDTLDGETVFKLYDTYGFPMDLTADVCRERNIIVDEAGFEAAMAEQRSRAQAAGNFGADYNAALKIDAETAFCGYTELVGQAKVTAIYQNGESVTAIKAGDEAVLVLDVTPFYAESGGQVGDKGQLVANGIEFTVNDTQKYGQATGHQGVLVAGSLSIGQMVEAKVDKKLRHRTQLNHSVTHLLHAALRQVLGTHVTQKGSLVDPERLRFDFSHFEAVKPAELKKVEELVNTQIRRNHELKVAEMAIDEAKEKGAMALFGEKYDAQVRVVTMGDFSIELCGGTHVGRTGDIGLFKITSEGGIAAGVRRIEAVTGAAAMAYVAQQQAELEEAAALLKGDTHSVVAKLKAQLDKMKQLEKDMAQLKDKLAAAASADLVGDAVVVNGVNVLIKKLDGVEAGSLRGLQDELKQKLKSAIIVLGTAQEGKVNLIAGVSNDLVGKVKAGELVAMVAAQVGGKGGGRPDMAQAGGSQPENLDAALAQVLPWITERLA</sequence>
<feature type="chain" id="PRO_0000347789" description="Alanine--tRNA ligase">
    <location>
        <begin position="1"/>
        <end position="874"/>
    </location>
</feature>
<feature type="binding site" evidence="1">
    <location>
        <position position="562"/>
    </location>
    <ligand>
        <name>Zn(2+)</name>
        <dbReference type="ChEBI" id="CHEBI:29105"/>
    </ligand>
</feature>
<feature type="binding site" evidence="1">
    <location>
        <position position="566"/>
    </location>
    <ligand>
        <name>Zn(2+)</name>
        <dbReference type="ChEBI" id="CHEBI:29105"/>
    </ligand>
</feature>
<feature type="binding site" evidence="1">
    <location>
        <position position="664"/>
    </location>
    <ligand>
        <name>Zn(2+)</name>
        <dbReference type="ChEBI" id="CHEBI:29105"/>
    </ligand>
</feature>
<feature type="binding site" evidence="1">
    <location>
        <position position="668"/>
    </location>
    <ligand>
        <name>Zn(2+)</name>
        <dbReference type="ChEBI" id="CHEBI:29105"/>
    </ligand>
</feature>
<organism>
    <name type="scientific">Shewanella putrefaciens (strain CN-32 / ATCC BAA-453)</name>
    <dbReference type="NCBI Taxonomy" id="319224"/>
    <lineage>
        <taxon>Bacteria</taxon>
        <taxon>Pseudomonadati</taxon>
        <taxon>Pseudomonadota</taxon>
        <taxon>Gammaproteobacteria</taxon>
        <taxon>Alteromonadales</taxon>
        <taxon>Shewanellaceae</taxon>
        <taxon>Shewanella</taxon>
    </lineage>
</organism>
<comment type="function">
    <text evidence="1">Catalyzes the attachment of alanine to tRNA(Ala) in a two-step reaction: alanine is first activated by ATP to form Ala-AMP and then transferred to the acceptor end of tRNA(Ala). Also edits incorrectly charged Ser-tRNA(Ala) and Gly-tRNA(Ala) via its editing domain.</text>
</comment>
<comment type="catalytic activity">
    <reaction evidence="1">
        <text>tRNA(Ala) + L-alanine + ATP = L-alanyl-tRNA(Ala) + AMP + diphosphate</text>
        <dbReference type="Rhea" id="RHEA:12540"/>
        <dbReference type="Rhea" id="RHEA-COMP:9657"/>
        <dbReference type="Rhea" id="RHEA-COMP:9923"/>
        <dbReference type="ChEBI" id="CHEBI:30616"/>
        <dbReference type="ChEBI" id="CHEBI:33019"/>
        <dbReference type="ChEBI" id="CHEBI:57972"/>
        <dbReference type="ChEBI" id="CHEBI:78442"/>
        <dbReference type="ChEBI" id="CHEBI:78497"/>
        <dbReference type="ChEBI" id="CHEBI:456215"/>
        <dbReference type="EC" id="6.1.1.7"/>
    </reaction>
</comment>
<comment type="cofactor">
    <cofactor evidence="1">
        <name>Zn(2+)</name>
        <dbReference type="ChEBI" id="CHEBI:29105"/>
    </cofactor>
    <text evidence="1">Binds 1 zinc ion per subunit.</text>
</comment>
<comment type="subcellular location">
    <subcellularLocation>
        <location evidence="1">Cytoplasm</location>
    </subcellularLocation>
</comment>
<comment type="domain">
    <text evidence="1">Consists of three domains; the N-terminal catalytic domain, the editing domain and the C-terminal C-Ala domain. The editing domain removes incorrectly charged amino acids, while the C-Ala domain, along with tRNA(Ala), serves as a bridge to cooperatively bring together the editing and aminoacylation centers thus stimulating deacylation of misacylated tRNAs.</text>
</comment>
<comment type="similarity">
    <text evidence="1">Belongs to the class-II aminoacyl-tRNA synthetase family.</text>
</comment>
<comment type="sequence caution" evidence="2">
    <conflict type="erroneous initiation">
        <sequence resource="EMBL-CDS" id="ABP76464"/>
    </conflict>
</comment>
<reference key="1">
    <citation type="submission" date="2007-04" db="EMBL/GenBank/DDBJ databases">
        <title>Complete sequence of Shewanella putrefaciens CN-32.</title>
        <authorList>
            <consortium name="US DOE Joint Genome Institute"/>
            <person name="Copeland A."/>
            <person name="Lucas S."/>
            <person name="Lapidus A."/>
            <person name="Barry K."/>
            <person name="Detter J.C."/>
            <person name="Glavina del Rio T."/>
            <person name="Hammon N."/>
            <person name="Israni S."/>
            <person name="Dalin E."/>
            <person name="Tice H."/>
            <person name="Pitluck S."/>
            <person name="Chain P."/>
            <person name="Malfatti S."/>
            <person name="Shin M."/>
            <person name="Vergez L."/>
            <person name="Schmutz J."/>
            <person name="Larimer F."/>
            <person name="Land M."/>
            <person name="Hauser L."/>
            <person name="Kyrpides N."/>
            <person name="Mikhailova N."/>
            <person name="Romine M.F."/>
            <person name="Fredrickson J."/>
            <person name="Tiedje J."/>
            <person name="Richardson P."/>
        </authorList>
    </citation>
    <scope>NUCLEOTIDE SEQUENCE [LARGE SCALE GENOMIC DNA]</scope>
    <source>
        <strain>CN-32 / ATCC BAA-453</strain>
    </source>
</reference>
<keyword id="KW-0030">Aminoacyl-tRNA synthetase</keyword>
<keyword id="KW-0067">ATP-binding</keyword>
<keyword id="KW-0963">Cytoplasm</keyword>
<keyword id="KW-0436">Ligase</keyword>
<keyword id="KW-0479">Metal-binding</keyword>
<keyword id="KW-0547">Nucleotide-binding</keyword>
<keyword id="KW-0648">Protein biosynthesis</keyword>
<keyword id="KW-0694">RNA-binding</keyword>
<keyword id="KW-0820">tRNA-binding</keyword>
<keyword id="KW-0862">Zinc</keyword>
<proteinExistence type="inferred from homology"/>
<evidence type="ECO:0000255" key="1">
    <source>
        <dbReference type="HAMAP-Rule" id="MF_00036"/>
    </source>
</evidence>
<evidence type="ECO:0000305" key="2"/>
<accession>A4Y931</accession>